<organism>
    <name type="scientific">Sulfurisphaera tokodaii (strain DSM 16993 / JCM 10545 / NBRC 100140 / 7)</name>
    <name type="common">Sulfolobus tokodaii</name>
    <dbReference type="NCBI Taxonomy" id="273063"/>
    <lineage>
        <taxon>Archaea</taxon>
        <taxon>Thermoproteota</taxon>
        <taxon>Thermoprotei</taxon>
        <taxon>Sulfolobales</taxon>
        <taxon>Sulfolobaceae</taxon>
        <taxon>Sulfurisphaera</taxon>
    </lineage>
</organism>
<proteinExistence type="inferred from homology"/>
<evidence type="ECO:0000255" key="1">
    <source>
        <dbReference type="HAMAP-Rule" id="MF_01264"/>
    </source>
</evidence>
<gene>
    <name evidence="1" type="primary">cca</name>
    <name type="ordered locus">STK_09520</name>
</gene>
<protein>
    <recommendedName>
        <fullName evidence="1">CCA-adding enzyme</fullName>
        <ecNumber evidence="1">2.7.7.72</ecNumber>
    </recommendedName>
    <alternativeName>
        <fullName evidence="1">CCA tRNA nucleotidyltransferase</fullName>
    </alternativeName>
    <alternativeName>
        <fullName evidence="1">tRNA CCA-pyrophosphorylase</fullName>
    </alternativeName>
    <alternativeName>
        <fullName evidence="1">tRNA adenylyl-/cytidylyl- transferase</fullName>
    </alternativeName>
    <alternativeName>
        <fullName evidence="1">tRNA nucleotidyltransferase</fullName>
    </alternativeName>
    <alternativeName>
        <fullName evidence="1">tRNA-NT</fullName>
    </alternativeName>
</protein>
<feature type="chain" id="PRO_0000139084" description="CCA-adding enzyme">
    <location>
        <begin position="1"/>
        <end position="413"/>
    </location>
</feature>
<feature type="binding site" evidence="1">
    <location>
        <position position="42"/>
    </location>
    <ligand>
        <name>ATP</name>
        <dbReference type="ChEBI" id="CHEBI:30616"/>
    </ligand>
</feature>
<feature type="binding site" evidence="1">
    <location>
        <position position="42"/>
    </location>
    <ligand>
        <name>CTP</name>
        <dbReference type="ChEBI" id="CHEBI:37563"/>
    </ligand>
</feature>
<feature type="binding site" evidence="1">
    <location>
        <position position="45"/>
    </location>
    <ligand>
        <name>ATP</name>
        <dbReference type="ChEBI" id="CHEBI:30616"/>
    </ligand>
</feature>
<feature type="binding site" evidence="1">
    <location>
        <position position="45"/>
    </location>
    <ligand>
        <name>CTP</name>
        <dbReference type="ChEBI" id="CHEBI:37563"/>
    </ligand>
</feature>
<feature type="binding site" evidence="1">
    <location>
        <position position="54"/>
    </location>
    <ligand>
        <name>Mg(2+)</name>
        <dbReference type="ChEBI" id="CHEBI:18420"/>
    </ligand>
</feature>
<feature type="binding site" evidence="1">
    <location>
        <position position="56"/>
    </location>
    <ligand>
        <name>Mg(2+)</name>
        <dbReference type="ChEBI" id="CHEBI:18420"/>
    </ligand>
</feature>
<feature type="binding site" evidence="1">
    <location>
        <position position="107"/>
    </location>
    <ligand>
        <name>Mg(2+)</name>
        <dbReference type="ChEBI" id="CHEBI:18420"/>
    </ligand>
</feature>
<feature type="binding site" evidence="1">
    <location>
        <position position="130"/>
    </location>
    <ligand>
        <name>ATP</name>
        <dbReference type="ChEBI" id="CHEBI:30616"/>
    </ligand>
</feature>
<feature type="binding site" evidence="1">
    <location>
        <position position="130"/>
    </location>
    <ligand>
        <name>CTP</name>
        <dbReference type="ChEBI" id="CHEBI:37563"/>
    </ligand>
</feature>
<feature type="binding site" evidence="1">
    <location>
        <position position="150"/>
    </location>
    <ligand>
        <name>ATP</name>
        <dbReference type="ChEBI" id="CHEBI:30616"/>
    </ligand>
</feature>
<feature type="binding site" evidence="1">
    <location>
        <position position="150"/>
    </location>
    <ligand>
        <name>CTP</name>
        <dbReference type="ChEBI" id="CHEBI:37563"/>
    </ligand>
</feature>
<feature type="binding site" evidence="1">
    <location>
        <position position="159"/>
    </location>
    <ligand>
        <name>ATP</name>
        <dbReference type="ChEBI" id="CHEBI:30616"/>
    </ligand>
</feature>
<feature type="binding site" evidence="1">
    <location>
        <position position="159"/>
    </location>
    <ligand>
        <name>CTP</name>
        <dbReference type="ChEBI" id="CHEBI:37563"/>
    </ligand>
</feature>
<comment type="function">
    <text evidence="1">Catalyzes the addition and repair of the essential 3'-terminal CCA sequence in tRNAs without using a nucleic acid template. Adds these three nucleotides in the order of C, C, and A to the tRNA nucleotide-73, using CTP and ATP as substrates and producing inorganic pyrophosphate. tRNA 3'-terminal CCA addition is required both for tRNA processing and repair. Also involved in tRNA surveillance by mediating tandem CCA addition to generate a CCACCA at the 3' terminus of unstable tRNAs. While stable tRNAs receive only 3'-terminal CCA, unstable tRNAs are marked with CCACCA and rapidly degraded.</text>
</comment>
<comment type="catalytic activity">
    <reaction evidence="1">
        <text>a tRNA precursor + 2 CTP + ATP = a tRNA with a 3' CCA end + 3 diphosphate</text>
        <dbReference type="Rhea" id="RHEA:14433"/>
        <dbReference type="Rhea" id="RHEA-COMP:10465"/>
        <dbReference type="Rhea" id="RHEA-COMP:10468"/>
        <dbReference type="ChEBI" id="CHEBI:30616"/>
        <dbReference type="ChEBI" id="CHEBI:33019"/>
        <dbReference type="ChEBI" id="CHEBI:37563"/>
        <dbReference type="ChEBI" id="CHEBI:74896"/>
        <dbReference type="ChEBI" id="CHEBI:83071"/>
        <dbReference type="EC" id="2.7.7.72"/>
    </reaction>
</comment>
<comment type="catalytic activity">
    <reaction evidence="1">
        <text>a tRNA with a 3' CCA end + 2 CTP + ATP = a tRNA with a 3' CCACCA end + 3 diphosphate</text>
        <dbReference type="Rhea" id="RHEA:76235"/>
        <dbReference type="Rhea" id="RHEA-COMP:10468"/>
        <dbReference type="Rhea" id="RHEA-COMP:18655"/>
        <dbReference type="ChEBI" id="CHEBI:30616"/>
        <dbReference type="ChEBI" id="CHEBI:33019"/>
        <dbReference type="ChEBI" id="CHEBI:37563"/>
        <dbReference type="ChEBI" id="CHEBI:83071"/>
        <dbReference type="ChEBI" id="CHEBI:195187"/>
    </reaction>
    <physiologicalReaction direction="left-to-right" evidence="1">
        <dbReference type="Rhea" id="RHEA:76236"/>
    </physiologicalReaction>
</comment>
<comment type="cofactor">
    <cofactor evidence="1">
        <name>Mg(2+)</name>
        <dbReference type="ChEBI" id="CHEBI:18420"/>
    </cofactor>
</comment>
<comment type="subunit">
    <text evidence="1">Homodimer.</text>
</comment>
<comment type="miscellaneous">
    <text evidence="1">A single active site specifically recognizes both ATP and CTP and is responsible for their addition.</text>
</comment>
<comment type="similarity">
    <text evidence="1">Belongs to the tRNA nucleotidyltransferase/poly(A) polymerase family. Archaeal CCA-adding enzyme subfamily.</text>
</comment>
<name>CCA_SULTO</name>
<accession>Q973E7</accession>
<accession>F9VNR4</accession>
<dbReference type="EC" id="2.7.7.72" evidence="1"/>
<dbReference type="EMBL" id="BA000023">
    <property type="protein sequence ID" value="BAK54422.1"/>
    <property type="molecule type" value="Genomic_DNA"/>
</dbReference>
<dbReference type="RefSeq" id="WP_010978948.1">
    <property type="nucleotide sequence ID" value="NC_003106.2"/>
</dbReference>
<dbReference type="SMR" id="Q973E7"/>
<dbReference type="STRING" id="273063.STK_09520"/>
<dbReference type="TCDB" id="3.A.22.1.3">
    <property type="family name" value="the transcription-coupled trex/tap nuclear mrna export complex (trex) family"/>
</dbReference>
<dbReference type="GeneID" id="1458917"/>
<dbReference type="KEGG" id="sto:STK_09520"/>
<dbReference type="PATRIC" id="fig|273063.9.peg.1064"/>
<dbReference type="eggNOG" id="arCOG04249">
    <property type="taxonomic scope" value="Archaea"/>
</dbReference>
<dbReference type="OrthoDB" id="7378at2157"/>
<dbReference type="Proteomes" id="UP000001015">
    <property type="component" value="Chromosome"/>
</dbReference>
<dbReference type="GO" id="GO:0005524">
    <property type="term" value="F:ATP binding"/>
    <property type="evidence" value="ECO:0007669"/>
    <property type="project" value="UniProtKB-UniRule"/>
</dbReference>
<dbReference type="GO" id="GO:0004810">
    <property type="term" value="F:CCA tRNA nucleotidyltransferase activity"/>
    <property type="evidence" value="ECO:0007669"/>
    <property type="project" value="UniProtKB-UniRule"/>
</dbReference>
<dbReference type="GO" id="GO:0000287">
    <property type="term" value="F:magnesium ion binding"/>
    <property type="evidence" value="ECO:0007669"/>
    <property type="project" value="UniProtKB-UniRule"/>
</dbReference>
<dbReference type="GO" id="GO:0000049">
    <property type="term" value="F:tRNA binding"/>
    <property type="evidence" value="ECO:0007669"/>
    <property type="project" value="UniProtKB-UniRule"/>
</dbReference>
<dbReference type="GO" id="GO:0042245">
    <property type="term" value="P:RNA repair"/>
    <property type="evidence" value="ECO:0007669"/>
    <property type="project" value="UniProtKB-KW"/>
</dbReference>
<dbReference type="GO" id="GO:0001680">
    <property type="term" value="P:tRNA 3'-terminal CCA addition"/>
    <property type="evidence" value="ECO:0007669"/>
    <property type="project" value="UniProtKB-UniRule"/>
</dbReference>
<dbReference type="CDD" id="cd05400">
    <property type="entry name" value="NT_2-5OAS_ClassI-CCAase"/>
    <property type="match status" value="1"/>
</dbReference>
<dbReference type="Gene3D" id="3.30.460.10">
    <property type="entry name" value="Beta Polymerase, domain 2"/>
    <property type="match status" value="1"/>
</dbReference>
<dbReference type="Gene3D" id="1.10.1410.30">
    <property type="entry name" value="CCA tRNA nucleotidyltransferase, domain 2"/>
    <property type="match status" value="1"/>
</dbReference>
<dbReference type="Gene3D" id="3.30.70.590">
    <property type="entry name" value="Poly(A) polymerase predicted RNA binding domain"/>
    <property type="match status" value="1"/>
</dbReference>
<dbReference type="HAMAP" id="MF_01264">
    <property type="entry name" value="CCA_arch"/>
    <property type="match status" value="1"/>
</dbReference>
<dbReference type="InterPro" id="IPR048833">
    <property type="entry name" value="CAA_C"/>
</dbReference>
<dbReference type="InterPro" id="IPR008229">
    <property type="entry name" value="CCA-adding_arc"/>
</dbReference>
<dbReference type="InterPro" id="IPR042090">
    <property type="entry name" value="CCA_tRNA_nucleotrans_2"/>
</dbReference>
<dbReference type="InterPro" id="IPR006116">
    <property type="entry name" value="NT_2-5OAS_ClassI-CCAase"/>
</dbReference>
<dbReference type="InterPro" id="IPR043519">
    <property type="entry name" value="NT_sf"/>
</dbReference>
<dbReference type="InterPro" id="IPR011068">
    <property type="entry name" value="NuclTrfase_I-like_C"/>
</dbReference>
<dbReference type="InterPro" id="IPR002934">
    <property type="entry name" value="Polymerase_NTP_transf_dom"/>
</dbReference>
<dbReference type="InterPro" id="IPR015329">
    <property type="entry name" value="tRNA_NucTransf2"/>
</dbReference>
<dbReference type="NCBIfam" id="TIGR03671">
    <property type="entry name" value="cca_archaeal"/>
    <property type="match status" value="1"/>
</dbReference>
<dbReference type="PANTHER" id="PTHR39643">
    <property type="entry name" value="CCA-ADDING ENZYME"/>
    <property type="match status" value="1"/>
</dbReference>
<dbReference type="PANTHER" id="PTHR39643:SF1">
    <property type="entry name" value="CCA-ADDING ENZYME"/>
    <property type="match status" value="1"/>
</dbReference>
<dbReference type="Pfam" id="PF21133">
    <property type="entry name" value="CAA_C"/>
    <property type="match status" value="1"/>
</dbReference>
<dbReference type="Pfam" id="PF01909">
    <property type="entry name" value="NTP_transf_2"/>
    <property type="match status" value="1"/>
</dbReference>
<dbReference type="Pfam" id="PF09249">
    <property type="entry name" value="tRNA_NucTransf2"/>
    <property type="match status" value="1"/>
</dbReference>
<dbReference type="PIRSF" id="PIRSF005335">
    <property type="entry name" value="CCA_arch"/>
    <property type="match status" value="1"/>
</dbReference>
<dbReference type="SUPFAM" id="SSF81301">
    <property type="entry name" value="Nucleotidyltransferase"/>
    <property type="match status" value="1"/>
</dbReference>
<dbReference type="SUPFAM" id="SSF55003">
    <property type="entry name" value="PAP/Archaeal CCA-adding enzyme, C-terminal domain"/>
    <property type="match status" value="1"/>
</dbReference>
<dbReference type="SUPFAM" id="SSF81631">
    <property type="entry name" value="PAP/OAS1 substrate-binding domain"/>
    <property type="match status" value="1"/>
</dbReference>
<keyword id="KW-0067">ATP-binding</keyword>
<keyword id="KW-0460">Magnesium</keyword>
<keyword id="KW-0479">Metal-binding</keyword>
<keyword id="KW-0547">Nucleotide-binding</keyword>
<keyword id="KW-0548">Nucleotidyltransferase</keyword>
<keyword id="KW-1185">Reference proteome</keyword>
<keyword id="KW-0692">RNA repair</keyword>
<keyword id="KW-0694">RNA-binding</keyword>
<keyword id="KW-0808">Transferase</keyword>
<keyword id="KW-0819">tRNA processing</keyword>
<sequence length="413" mass="48137">MTIEEEVLKRIKPSKEDEEKLRERAQIILDRLKGYNAEIEGSFRKGTWLKGDTDIDIFVFFPKSVGKEYLREKALKELIERFRDLNYKIAYAEHPYLIVYVDDVEIDVVPALSIESGEEAITAADRTPFHTKYVISHLDEKGRDEVRLLKRFLKGIGVYGAEIKVKGFSGYVTELLIIYYGSFKEVLRNASKFRPPVRIELVRPKKEFDSPLIVPDPVDPKRNASSAVSLKSLATFALASKIYLEKPSMEFFFPSKPGRQTIKGDILLVKVKIEESTVEDIIWGQVWRNVEKLKTLISHEGYRVIDISAWGDAENITIGIQLESKSIGEYYLNVGPYFYLHNVKNFIEENENVWIGEDGRLYSIKRRRYTVEEIIKRNLSFKQKFTYELQWLTEEVDDPWINLFLRKTPSWLK</sequence>
<reference key="1">
    <citation type="journal article" date="2001" name="DNA Res.">
        <title>Complete genome sequence of an aerobic thermoacidophilic Crenarchaeon, Sulfolobus tokodaii strain7.</title>
        <authorList>
            <person name="Kawarabayasi Y."/>
            <person name="Hino Y."/>
            <person name="Horikawa H."/>
            <person name="Jin-no K."/>
            <person name="Takahashi M."/>
            <person name="Sekine M."/>
            <person name="Baba S."/>
            <person name="Ankai A."/>
            <person name="Kosugi H."/>
            <person name="Hosoyama A."/>
            <person name="Fukui S."/>
            <person name="Nagai Y."/>
            <person name="Nishijima K."/>
            <person name="Otsuka R."/>
            <person name="Nakazawa H."/>
            <person name="Takamiya M."/>
            <person name="Kato Y."/>
            <person name="Yoshizawa T."/>
            <person name="Tanaka T."/>
            <person name="Kudoh Y."/>
            <person name="Yamazaki J."/>
            <person name="Kushida N."/>
            <person name="Oguchi A."/>
            <person name="Aoki K."/>
            <person name="Masuda S."/>
            <person name="Yanagii M."/>
            <person name="Nishimura M."/>
            <person name="Yamagishi A."/>
            <person name="Oshima T."/>
            <person name="Kikuchi H."/>
        </authorList>
    </citation>
    <scope>NUCLEOTIDE SEQUENCE [LARGE SCALE GENOMIC DNA]</scope>
    <source>
        <strain>DSM 16993 / JCM 10545 / NBRC 100140 / 7</strain>
    </source>
</reference>